<feature type="chain" id="PRO_0000099595" description="Protein OPG104">
    <location>
        <begin position="1"/>
        <end position="133"/>
    </location>
</feature>
<feature type="topological domain" description="Virion surface" evidence="3">
    <location>
        <begin position="1"/>
        <end position="111"/>
    </location>
</feature>
<feature type="transmembrane region" description="Helical; Signal-anchor" evidence="1">
    <location>
        <begin position="112"/>
        <end position="132"/>
    </location>
</feature>
<sequence length="133" mass="15158">MTDEQIYAFCDANKDDIRCKCIYPDKSIVRIGIDTRLPYYCWYEPCKRSDALLPASLKKNITKCNVSDCTISLGNVSITDSKLDVNNVCDSKRVATENIAVRYLNQEIRYPIIDIKWLPIGLLALAILILAFF</sequence>
<dbReference type="EMBL" id="X01978">
    <property type="protein sequence ID" value="CAA26019.1"/>
    <property type="status" value="ALT_FRAME"/>
    <property type="molecule type" value="Genomic_DNA"/>
</dbReference>
<dbReference type="EMBL" id="M13209">
    <property type="protein sequence ID" value="AAB59834.1"/>
    <property type="molecule type" value="Genomic_DNA"/>
</dbReference>
<dbReference type="EMBL" id="AY243312">
    <property type="protein sequence ID" value="AAO89376.1"/>
    <property type="molecule type" value="Genomic_DNA"/>
</dbReference>
<dbReference type="PIR" id="B26216">
    <property type="entry name" value="QQVZEL"/>
</dbReference>
<dbReference type="RefSeq" id="YP_232979.1">
    <property type="nucleotide sequence ID" value="NC_006998.1"/>
</dbReference>
<dbReference type="SMR" id="P07618"/>
<dbReference type="IntAct" id="P07618">
    <property type="interactions" value="1"/>
</dbReference>
<dbReference type="MINT" id="P07618"/>
<dbReference type="DNASU" id="3707553"/>
<dbReference type="GeneID" id="3707553"/>
<dbReference type="KEGG" id="vg:3707553"/>
<dbReference type="Proteomes" id="UP000000344">
    <property type="component" value="Genome"/>
</dbReference>
<dbReference type="GO" id="GO:0016020">
    <property type="term" value="C:membrane"/>
    <property type="evidence" value="ECO:0007669"/>
    <property type="project" value="UniProtKB-KW"/>
</dbReference>
<dbReference type="GO" id="GO:0019031">
    <property type="term" value="C:viral envelope"/>
    <property type="evidence" value="ECO:0007669"/>
    <property type="project" value="UniProtKB-KW"/>
</dbReference>
<dbReference type="GO" id="GO:0055036">
    <property type="term" value="C:virion membrane"/>
    <property type="evidence" value="ECO:0007669"/>
    <property type="project" value="UniProtKB-SubCell"/>
</dbReference>
<dbReference type="GO" id="GO:0019064">
    <property type="term" value="P:fusion of virus membrane with host plasma membrane"/>
    <property type="evidence" value="ECO:0007669"/>
    <property type="project" value="UniProtKB-KW"/>
</dbReference>
<dbReference type="GO" id="GO:0046718">
    <property type="term" value="P:symbiont entry into host cell"/>
    <property type="evidence" value="ECO:0007669"/>
    <property type="project" value="UniProtKB-KW"/>
</dbReference>
<dbReference type="InterPro" id="IPR004251">
    <property type="entry name" value="Pox_virus_G9/A16"/>
</dbReference>
<dbReference type="Pfam" id="PF03003">
    <property type="entry name" value="Pox_G9-A16"/>
    <property type="match status" value="1"/>
</dbReference>
<name>PG104_VACCW</name>
<protein>
    <recommendedName>
        <fullName>Protein OPG104</fullName>
    </recommendedName>
    <alternativeName>
        <fullName>Protein F11</fullName>
    </alternativeName>
    <alternativeName>
        <fullName>Protein J5</fullName>
    </alternativeName>
</protein>
<evidence type="ECO:0000255" key="1"/>
<evidence type="ECO:0000269" key="2">
    <source>
    </source>
</evidence>
<evidence type="ECO:0000305" key="3"/>
<reference key="1">
    <citation type="journal article" date="1985" name="Nucleic Acids Res.">
        <title>Nucleotide sequence of a cluster of early and late genes in a conserved segment of the vaccinia virus genome.</title>
        <authorList>
            <person name="Plucienniczak A."/>
            <person name="Schroeder E."/>
            <person name="Zettlmeissl G."/>
            <person name="Streeck R.E."/>
        </authorList>
    </citation>
    <scope>NUCLEOTIDE SEQUENCE [GENOMIC DNA]</scope>
</reference>
<reference key="2">
    <citation type="journal article" date="1986" name="Proc. Natl. Acad. Sci. U.S.A.">
        <title>Homology between RNA polymerases of poxviruses, prokaryotes, and eukaryotes: nucleotide sequence and transcriptional analysis of vaccinia virus genes encoding 147-kDa and 22-kDa subunits.</title>
        <authorList>
            <person name="Broyles S.S."/>
            <person name="Moss B."/>
        </authorList>
    </citation>
    <scope>NUCLEOTIDE SEQUENCE [GENOMIC DNA]</scope>
</reference>
<reference key="3">
    <citation type="submission" date="2003-02" db="EMBL/GenBank/DDBJ databases">
        <title>Sequencing of the coding region of Vaccinia-WR to an average 9-fold redundancy and an error rate of 0.16/10kb.</title>
        <authorList>
            <person name="Esposito J.J."/>
            <person name="Frace A.M."/>
            <person name="Sammons S.A."/>
            <person name="Olsen-Rasmussen M."/>
            <person name="Osborne J."/>
            <person name="Wohlhueter R."/>
        </authorList>
    </citation>
    <scope>NUCLEOTIDE SEQUENCE [LARGE SCALE GENOMIC DNA]</scope>
</reference>
<reference key="4">
    <citation type="journal article" date="2005" name="Proc. Natl. Acad. Sci. U.S.A.">
        <title>Poxvirus multiprotein entry-fusion complex.</title>
        <authorList>
            <person name="Senkevich T.G."/>
            <person name="Ojeda S."/>
            <person name="Townsley A."/>
            <person name="Nelson G.E."/>
            <person name="Moss B."/>
        </authorList>
    </citation>
    <scope>IDENTIFICATION IN A COMPLEX WITH OPG143; OPG147; OPG155; OPG086; OPG094; OPG107 AND OPG099</scope>
    <scope>FUNCTION</scope>
</reference>
<organism>
    <name type="scientific">Vaccinia virus (strain Western Reserve)</name>
    <name type="common">VACV</name>
    <name type="synonym">Vaccinia virus (strain WR)</name>
    <dbReference type="NCBI Taxonomy" id="10254"/>
    <lineage>
        <taxon>Viruses</taxon>
        <taxon>Varidnaviria</taxon>
        <taxon>Bamfordvirae</taxon>
        <taxon>Nucleocytoviricota</taxon>
        <taxon>Pokkesviricetes</taxon>
        <taxon>Chitovirales</taxon>
        <taxon>Poxviridae</taxon>
        <taxon>Chordopoxvirinae</taxon>
        <taxon>Orthopoxvirus</taxon>
        <taxon>Vaccinia virus</taxon>
    </lineage>
</organism>
<comment type="function">
    <text>Envelope protein part of the entry-fusion complex responsible for the virus membrane fusion with host cell membrane during virus entry. Also plays a role in cell-cell fusion (syncytium formation).</text>
</comment>
<comment type="subunit">
    <text evidence="2">Part of a stable entry-fusion complex (EFC) which is at least composed of proteins OPG143, OPG147, OPG155, OPG086, OPG094, OPG107, OPG104, and OPG099. Formation of the viral membrane is necessary for the assembly of the complex.</text>
</comment>
<comment type="subcellular location">
    <subcellularLocation>
        <location evidence="3">Virion membrane</location>
        <topology evidence="3">Single-pass membrane protein</topology>
    </subcellularLocation>
    <text>Component of the mature virion (MV) membrane. The mature virion is located in the cytoplasm of infected cells and is probably released by cell lysis.</text>
</comment>
<comment type="similarity">
    <text evidence="3">Belongs to the orthopoxvirus OPG104 family.</text>
</comment>
<comment type="sequence caution" evidence="3">
    <conflict type="frameshift">
        <sequence resource="EMBL-CDS" id="CAA26019"/>
    </conflict>
</comment>
<accession>P07618</accession>
<keyword id="KW-1169">Fusion of virus membrane with host cell membrane</keyword>
<keyword id="KW-1168">Fusion of virus membrane with host membrane</keyword>
<keyword id="KW-0472">Membrane</keyword>
<keyword id="KW-1185">Reference proteome</keyword>
<keyword id="KW-0735">Signal-anchor</keyword>
<keyword id="KW-0812">Transmembrane</keyword>
<keyword id="KW-1133">Transmembrane helix</keyword>
<keyword id="KW-0261">Viral envelope protein</keyword>
<keyword id="KW-1162">Viral penetration into host cytoplasm</keyword>
<keyword id="KW-0946">Virion</keyword>
<keyword id="KW-1160">Virus entry into host cell</keyword>
<proteinExistence type="evidence at protein level"/>
<gene>
    <name type="primary">OPG104</name>
    <name type="ordered locus">VACWR097</name>
    <name type="ORF">J5L</name>
</gene>
<organismHost>
    <name type="scientific">Bos taurus</name>
    <name type="common">Bovine</name>
    <dbReference type="NCBI Taxonomy" id="9913"/>
</organismHost>